<feature type="chain" id="PRO_1000165994" description="Large ribosomal subunit protein uL4">
    <location>
        <begin position="1"/>
        <end position="204"/>
    </location>
</feature>
<feature type="region of interest" description="Disordered" evidence="2">
    <location>
        <begin position="49"/>
        <end position="75"/>
    </location>
</feature>
<keyword id="KW-1185">Reference proteome</keyword>
<keyword id="KW-0687">Ribonucleoprotein</keyword>
<keyword id="KW-0689">Ribosomal protein</keyword>
<keyword id="KW-0694">RNA-binding</keyword>
<keyword id="KW-0699">rRNA-binding</keyword>
<evidence type="ECO:0000255" key="1">
    <source>
        <dbReference type="HAMAP-Rule" id="MF_01328"/>
    </source>
</evidence>
<evidence type="ECO:0000256" key="2">
    <source>
        <dbReference type="SAM" id="MobiDB-lite"/>
    </source>
</evidence>
<evidence type="ECO:0000305" key="3"/>
<comment type="function">
    <text evidence="1">One of the primary rRNA binding proteins, this protein initially binds near the 5'-end of the 23S rRNA. It is important during the early stages of 50S assembly. It makes multiple contacts with different domains of the 23S rRNA in the assembled 50S subunit and ribosome.</text>
</comment>
<comment type="function">
    <text evidence="1">Forms part of the polypeptide exit tunnel.</text>
</comment>
<comment type="subunit">
    <text evidence="1">Part of the 50S ribosomal subunit.</text>
</comment>
<comment type="similarity">
    <text evidence="1">Belongs to the universal ribosomal protein uL4 family.</text>
</comment>
<reference key="1">
    <citation type="journal article" date="2008" name="Foodborne Pathog. Dis.">
        <title>The complete genome sequence and analysis of the human pathogen Campylobacter lari.</title>
        <authorList>
            <person name="Miller W.G."/>
            <person name="Wang G."/>
            <person name="Binnewies T.T."/>
            <person name="Parker C.T."/>
        </authorList>
    </citation>
    <scope>NUCLEOTIDE SEQUENCE [LARGE SCALE GENOMIC DNA]</scope>
    <source>
        <strain>RM2100 / D67 / ATCC BAA-1060</strain>
    </source>
</reference>
<gene>
    <name evidence="1" type="primary">rplD</name>
    <name type="ordered locus">Cla_0060</name>
</gene>
<proteinExistence type="inferred from homology"/>
<name>RL4_CAMLR</name>
<organism>
    <name type="scientific">Campylobacter lari (strain RM2100 / D67 / ATCC BAA-1060)</name>
    <dbReference type="NCBI Taxonomy" id="306263"/>
    <lineage>
        <taxon>Bacteria</taxon>
        <taxon>Pseudomonadati</taxon>
        <taxon>Campylobacterota</taxon>
        <taxon>Epsilonproteobacteria</taxon>
        <taxon>Campylobacterales</taxon>
        <taxon>Campylobacteraceae</taxon>
        <taxon>Campylobacter</taxon>
    </lineage>
</organism>
<accession>B9KEE1</accession>
<protein>
    <recommendedName>
        <fullName evidence="1">Large ribosomal subunit protein uL4</fullName>
    </recommendedName>
    <alternativeName>
        <fullName evidence="3">50S ribosomal protein L4</fullName>
    </alternativeName>
</protein>
<dbReference type="EMBL" id="CP000932">
    <property type="protein sequence ID" value="ACM63426.1"/>
    <property type="molecule type" value="Genomic_DNA"/>
</dbReference>
<dbReference type="RefSeq" id="WP_012660812.1">
    <property type="nucleotide sequence ID" value="NC_012039.1"/>
</dbReference>
<dbReference type="SMR" id="B9KEE1"/>
<dbReference type="STRING" id="306263.Cla_0060"/>
<dbReference type="KEGG" id="cla:CLA_0060"/>
<dbReference type="PATRIC" id="fig|306263.5.peg.59"/>
<dbReference type="eggNOG" id="COG0088">
    <property type="taxonomic scope" value="Bacteria"/>
</dbReference>
<dbReference type="HOGENOM" id="CLU_041575_5_2_7"/>
<dbReference type="Proteomes" id="UP000007727">
    <property type="component" value="Chromosome"/>
</dbReference>
<dbReference type="GO" id="GO:1990904">
    <property type="term" value="C:ribonucleoprotein complex"/>
    <property type="evidence" value="ECO:0007669"/>
    <property type="project" value="UniProtKB-KW"/>
</dbReference>
<dbReference type="GO" id="GO:0005840">
    <property type="term" value="C:ribosome"/>
    <property type="evidence" value="ECO:0007669"/>
    <property type="project" value="UniProtKB-KW"/>
</dbReference>
<dbReference type="GO" id="GO:0019843">
    <property type="term" value="F:rRNA binding"/>
    <property type="evidence" value="ECO:0007669"/>
    <property type="project" value="UniProtKB-UniRule"/>
</dbReference>
<dbReference type="GO" id="GO:0003735">
    <property type="term" value="F:structural constituent of ribosome"/>
    <property type="evidence" value="ECO:0007669"/>
    <property type="project" value="InterPro"/>
</dbReference>
<dbReference type="GO" id="GO:0006412">
    <property type="term" value="P:translation"/>
    <property type="evidence" value="ECO:0007669"/>
    <property type="project" value="UniProtKB-UniRule"/>
</dbReference>
<dbReference type="FunFam" id="3.40.1370.10:FF:000008">
    <property type="entry name" value="50S ribosomal protein L4"/>
    <property type="match status" value="1"/>
</dbReference>
<dbReference type="Gene3D" id="3.40.1370.10">
    <property type="match status" value="1"/>
</dbReference>
<dbReference type="HAMAP" id="MF_01328_B">
    <property type="entry name" value="Ribosomal_uL4_B"/>
    <property type="match status" value="1"/>
</dbReference>
<dbReference type="InterPro" id="IPR002136">
    <property type="entry name" value="Ribosomal_uL4"/>
</dbReference>
<dbReference type="InterPro" id="IPR013005">
    <property type="entry name" value="Ribosomal_uL4-like"/>
</dbReference>
<dbReference type="InterPro" id="IPR023574">
    <property type="entry name" value="Ribosomal_uL4_dom_sf"/>
</dbReference>
<dbReference type="NCBIfam" id="TIGR03953">
    <property type="entry name" value="rplD_bact"/>
    <property type="match status" value="1"/>
</dbReference>
<dbReference type="PANTHER" id="PTHR10746">
    <property type="entry name" value="50S RIBOSOMAL PROTEIN L4"/>
    <property type="match status" value="1"/>
</dbReference>
<dbReference type="PANTHER" id="PTHR10746:SF6">
    <property type="entry name" value="LARGE RIBOSOMAL SUBUNIT PROTEIN UL4M"/>
    <property type="match status" value="1"/>
</dbReference>
<dbReference type="Pfam" id="PF00573">
    <property type="entry name" value="Ribosomal_L4"/>
    <property type="match status" value="1"/>
</dbReference>
<dbReference type="SUPFAM" id="SSF52166">
    <property type="entry name" value="Ribosomal protein L4"/>
    <property type="match status" value="1"/>
</dbReference>
<sequence>MSKVTVLNDKFEKASELDLPAKYAEVNPHNLYLYVKSYLASLRANTAHTKGRSDVSGGGKKPWRQKGRGGARAGSTRTNVWVGGAVAFGPKNNRNYFQKVNKKQKRLALERALEDKAAKNALFSVDSLSIESGKTKDANAVIKKLGLKDVLIVKDLLDEKTLLAFRNLANCYVVDVNEVNAYLVSVFNAVIIEKAALESIVKEG</sequence>